<accession>A6UY04</accession>
<feature type="chain" id="PRO_1000049596" description="Probable 2-(5''-triphosphoribosyl)-3'-dephosphocoenzyme-A synthase">
    <location>
        <begin position="1"/>
        <end position="293"/>
    </location>
</feature>
<evidence type="ECO:0000255" key="1">
    <source>
        <dbReference type="HAMAP-Rule" id="MF_01883"/>
    </source>
</evidence>
<dbReference type="EC" id="2.4.2.52" evidence="1"/>
<dbReference type="EMBL" id="CP000744">
    <property type="protein sequence ID" value="ABR85098.1"/>
    <property type="molecule type" value="Genomic_DNA"/>
</dbReference>
<dbReference type="RefSeq" id="WP_012073851.1">
    <property type="nucleotide sequence ID" value="NC_009656.1"/>
</dbReference>
<dbReference type="KEGG" id="pap:PSPA7_0293"/>
<dbReference type="HOGENOM" id="CLU_056179_0_0_6"/>
<dbReference type="Proteomes" id="UP000001582">
    <property type="component" value="Chromosome"/>
</dbReference>
<dbReference type="GO" id="GO:0005524">
    <property type="term" value="F:ATP binding"/>
    <property type="evidence" value="ECO:0007669"/>
    <property type="project" value="UniProtKB-KW"/>
</dbReference>
<dbReference type="GO" id="GO:0046917">
    <property type="term" value="F:triphosphoribosyl-dephospho-CoA synthase activity"/>
    <property type="evidence" value="ECO:0007669"/>
    <property type="project" value="UniProtKB-UniRule"/>
</dbReference>
<dbReference type="GO" id="GO:0051191">
    <property type="term" value="P:prosthetic group biosynthetic process"/>
    <property type="evidence" value="ECO:0007669"/>
    <property type="project" value="TreeGrafter"/>
</dbReference>
<dbReference type="Gene3D" id="1.10.4200.10">
    <property type="entry name" value="Triphosphoribosyl-dephospho-CoA protein"/>
    <property type="match status" value="2"/>
</dbReference>
<dbReference type="HAMAP" id="MF_01883">
    <property type="entry name" value="MdcB"/>
    <property type="match status" value="1"/>
</dbReference>
<dbReference type="InterPro" id="IPR002736">
    <property type="entry name" value="CitG"/>
</dbReference>
<dbReference type="InterPro" id="IPR017555">
    <property type="entry name" value="TriPribosyl-deP-CoA_syn"/>
</dbReference>
<dbReference type="NCBIfam" id="TIGR03132">
    <property type="entry name" value="malonate_mdcB"/>
    <property type="match status" value="1"/>
</dbReference>
<dbReference type="NCBIfam" id="NF002315">
    <property type="entry name" value="PRK01237.1"/>
    <property type="match status" value="1"/>
</dbReference>
<dbReference type="PANTHER" id="PTHR30201:SF2">
    <property type="entry name" value="2-(5''-TRIPHOSPHORIBOSYL)-3'-DEPHOSPHOCOENZYME-A SYNTHASE"/>
    <property type="match status" value="1"/>
</dbReference>
<dbReference type="PANTHER" id="PTHR30201">
    <property type="entry name" value="TRIPHOSPHORIBOSYL-DEPHOSPHO-COA SYNTHASE"/>
    <property type="match status" value="1"/>
</dbReference>
<dbReference type="Pfam" id="PF01874">
    <property type="entry name" value="CitG"/>
    <property type="match status" value="1"/>
</dbReference>
<keyword id="KW-0067">ATP-binding</keyword>
<keyword id="KW-0547">Nucleotide-binding</keyword>
<keyword id="KW-0808">Transferase</keyword>
<sequence length="293" mass="30640">MNAIANLAATPRADLGECLADLAVDALIDEAELSPKPALVDRRGNGAHADLHLGLMQASALSLWPCFKEMADAAQRHARIDARLRGVLGQLGREGEVAMLRTTEGVNSHRGAIWALGLLVAAAALAPRRTQAGEVAARAGRIALLDDPAAASGDSHGERVRRRYGVGGAREEARLGFPRAVRHGLPQLWRSRESGAGEQNARLDALLAIMSVLDDTCVLHRAGRVGLAAMQEGARAVLAAGGSASLAGRRRLRELDRRLLALNASPGGAADLLAACLFLDRLPAALGGWAGSL</sequence>
<comment type="function">
    <text evidence="1">Involved in the formation of 2-(5''-phosphoribosyl)-3'-dephosphocoenzyme-A, the prosthetic group of the acyl-carrier protein of the malonate decarboxylase.</text>
</comment>
<comment type="catalytic activity">
    <reaction evidence="1">
        <text>3'-dephospho-CoA + ATP = 2'-(5''-triphospho-alpha-D-ribosyl)-3'-dephospho-CoA + adenine</text>
        <dbReference type="Rhea" id="RHEA:15117"/>
        <dbReference type="ChEBI" id="CHEBI:16708"/>
        <dbReference type="ChEBI" id="CHEBI:30616"/>
        <dbReference type="ChEBI" id="CHEBI:57328"/>
        <dbReference type="ChEBI" id="CHEBI:61378"/>
        <dbReference type="EC" id="2.4.2.52"/>
    </reaction>
</comment>
<comment type="similarity">
    <text evidence="1">Belongs to the CitG/MdcB family.</text>
</comment>
<organism>
    <name type="scientific">Pseudomonas paraeruginosa (strain DSM 24068 / PA7)</name>
    <name type="common">Pseudomonas aeruginosa (strain PA7)</name>
    <dbReference type="NCBI Taxonomy" id="381754"/>
    <lineage>
        <taxon>Bacteria</taxon>
        <taxon>Pseudomonadati</taxon>
        <taxon>Pseudomonadota</taxon>
        <taxon>Gammaproteobacteria</taxon>
        <taxon>Pseudomonadales</taxon>
        <taxon>Pseudomonadaceae</taxon>
        <taxon>Pseudomonas</taxon>
        <taxon>Pseudomonas paraeruginosa</taxon>
    </lineage>
</organism>
<protein>
    <recommendedName>
        <fullName evidence="1">Probable 2-(5''-triphosphoribosyl)-3'-dephosphocoenzyme-A synthase</fullName>
        <shortName evidence="1">2-(5''-triphosphoribosyl)-3'-dephospho-CoA synthase</shortName>
        <ecNumber evidence="1">2.4.2.52</ecNumber>
    </recommendedName>
</protein>
<gene>
    <name evidence="1" type="primary">mdcB</name>
    <name type="ordered locus">PSPA7_0293</name>
</gene>
<reference key="1">
    <citation type="submission" date="2007-06" db="EMBL/GenBank/DDBJ databases">
        <authorList>
            <person name="Dodson R.J."/>
            <person name="Harkins D."/>
            <person name="Paulsen I.T."/>
        </authorList>
    </citation>
    <scope>NUCLEOTIDE SEQUENCE [LARGE SCALE GENOMIC DNA]</scope>
    <source>
        <strain>DSM 24068 / PA7</strain>
    </source>
</reference>
<proteinExistence type="inferred from homology"/>
<name>MDCB_PSEP7</name>